<organism>
    <name type="scientific">Serratia marcescens</name>
    <dbReference type="NCBI Taxonomy" id="615"/>
    <lineage>
        <taxon>Bacteria</taxon>
        <taxon>Pseudomonadati</taxon>
        <taxon>Pseudomonadota</taxon>
        <taxon>Gammaproteobacteria</taxon>
        <taxon>Enterobacterales</taxon>
        <taxon>Yersiniaceae</taxon>
        <taxon>Serratia</taxon>
    </lineage>
</organism>
<keyword id="KW-0614">Plasmid</keyword>
<keyword id="KW-0778">Tellurium resistance</keyword>
<gene>
    <name type="primary">terD</name>
</gene>
<feature type="chain" id="PRO_0000170778" description="Tellurium resistance protein TerD">
    <location>
        <begin position="1"/>
        <end position="192"/>
    </location>
</feature>
<geneLocation type="plasmid">
    <name>IncHI2 R478</name>
</geneLocation>
<accession>Q52357</accession>
<dbReference type="EMBL" id="U59239">
    <property type="protein sequence ID" value="AAA86850.1"/>
    <property type="molecule type" value="Genomic_DNA"/>
</dbReference>
<dbReference type="RefSeq" id="NP_941153.1">
    <property type="nucleotide sequence ID" value="NC_005211.1"/>
</dbReference>
<dbReference type="RefSeq" id="WP_000116680.1">
    <property type="nucleotide sequence ID" value="NZ_VOMJ01000014.1"/>
</dbReference>
<dbReference type="SMR" id="Q52357"/>
<dbReference type="GeneID" id="93248007"/>
<dbReference type="GO" id="GO:0046690">
    <property type="term" value="P:response to tellurium ion"/>
    <property type="evidence" value="ECO:0007669"/>
    <property type="project" value="UniProtKB-KW"/>
</dbReference>
<dbReference type="CDD" id="cd06974">
    <property type="entry name" value="TerD_like"/>
    <property type="match status" value="1"/>
</dbReference>
<dbReference type="FunFam" id="2.60.60.30:FF:000001">
    <property type="entry name" value="Tellurium resistance protein TerD"/>
    <property type="match status" value="1"/>
</dbReference>
<dbReference type="Gene3D" id="2.60.60.30">
    <property type="entry name" value="sav2460 like domains"/>
    <property type="match status" value="1"/>
</dbReference>
<dbReference type="InterPro" id="IPR051324">
    <property type="entry name" value="Stress/Tellurium_Resist"/>
</dbReference>
<dbReference type="InterPro" id="IPR003325">
    <property type="entry name" value="TerD"/>
</dbReference>
<dbReference type="PANTHER" id="PTHR32097">
    <property type="entry name" value="CAMP-BINDING PROTEIN 1-RELATED"/>
    <property type="match status" value="1"/>
</dbReference>
<dbReference type="PANTHER" id="PTHR32097:SF4">
    <property type="entry name" value="GENERAL STRESS PROTEIN 16U"/>
    <property type="match status" value="1"/>
</dbReference>
<dbReference type="Pfam" id="PF02342">
    <property type="entry name" value="TerD"/>
    <property type="match status" value="1"/>
</dbReference>
<sequence length="192" mass="20529">MSVSLSKGGNVSLSKAAPSMKNVLVGLGWDARSTDGQDFDLDASAFLLASNGKVRGDSDFIFYNNLTSSDGSVTHTGDNRTGEGDGDDESLKIKLDAVPSEVDKIIFVVTIHDAQARRQSFGQVSGAFIRLVNDDNQTEVARYDLTEDASTETAMLFGELYRHNGEWKFRAVGQGYAGGLASVCAQYGINAS</sequence>
<evidence type="ECO:0000305" key="1"/>
<comment type="function">
    <text>Not known; seems to contribute to the tellurium resistance (Ter) mechanism. Also involved in phage inhibition (Phi) and colicin resistance (PacB).</text>
</comment>
<comment type="similarity">
    <text evidence="1">Belongs to the CAPAB/TerDEXZ family.</text>
</comment>
<protein>
    <recommendedName>
        <fullName>Tellurium resistance protein TerD</fullName>
    </recommendedName>
</protein>
<proteinExistence type="inferred from homology"/>
<name>TERD_SERMA</name>
<reference key="1">
    <citation type="journal article" date="1995" name="J. Bacteriol.">
        <title>Phage inhibition, colicin resistance, and tellurite resistance are encoded by a single cluster of genes on the IncHI2 plasmid R478.</title>
        <authorList>
            <person name="Whelan K.F."/>
            <person name="Colleran E."/>
            <person name="Taylor D.E."/>
        </authorList>
    </citation>
    <scope>NUCLEOTIDE SEQUENCE [GENOMIC DNA]</scope>
</reference>